<keyword id="KW-0025">Alternative splicing</keyword>
<keyword id="KW-0125">Carotenoid biosynthesis</keyword>
<keyword id="KW-0150">Chloroplast</keyword>
<keyword id="KW-0378">Hydrolase</keyword>
<keyword id="KW-0408">Iron</keyword>
<keyword id="KW-0472">Membrane</keyword>
<keyword id="KW-0479">Metal-binding</keyword>
<keyword id="KW-0520">NAD</keyword>
<keyword id="KW-0560">Oxidoreductase</keyword>
<keyword id="KW-0934">Plastid</keyword>
<keyword id="KW-1185">Reference proteome</keyword>
<keyword id="KW-0809">Transit peptide</keyword>
<keyword id="KW-0812">Transmembrane</keyword>
<keyword id="KW-1133">Transmembrane helix</keyword>
<feature type="transit peptide" description="Chloroplast" evidence="3">
    <location>
        <begin position="1"/>
        <end position="52"/>
    </location>
</feature>
<feature type="chain" id="PRO_0000412805" description="Beta-carotene 3-hydroxylase 2, chloroplastic">
    <location>
        <begin position="53"/>
        <end position="303"/>
    </location>
</feature>
<feature type="transmembrane region" description="Helical" evidence="3">
    <location>
        <begin position="96"/>
        <end position="116"/>
    </location>
</feature>
<feature type="transmembrane region" description="Helical" evidence="3">
    <location>
        <begin position="130"/>
        <end position="150"/>
    </location>
</feature>
<feature type="transmembrane region" description="Helical" evidence="3">
    <location>
        <begin position="180"/>
        <end position="200"/>
    </location>
</feature>
<feature type="transmembrane region" description="Helical" evidence="3">
    <location>
        <begin position="206"/>
        <end position="226"/>
    </location>
</feature>
<feature type="domain" description="Fatty acid hydroxylase" evidence="3">
    <location>
        <begin position="143"/>
        <end position="270"/>
    </location>
</feature>
<feature type="short sequence motif" description="Histidine box-1">
    <location>
        <begin position="155"/>
        <end position="160"/>
    </location>
</feature>
<feature type="short sequence motif" description="Histidine box-2">
    <location>
        <begin position="165"/>
        <end position="171"/>
    </location>
</feature>
<feature type="short sequence motif" description="Histidine box-3">
    <location>
        <begin position="228"/>
        <end position="233"/>
    </location>
</feature>
<feature type="short sequence motif" description="Histidine box-4">
    <location>
        <begin position="254"/>
        <end position="258"/>
    </location>
</feature>
<feature type="splice variant" id="VSP_041795" description="In isoform 2." evidence="7">
    <location>
        <begin position="144"/>
        <end position="212"/>
    </location>
</feature>
<name>BCH2_ARATH</name>
<organism>
    <name type="scientific">Arabidopsis thaliana</name>
    <name type="common">Mouse-ear cress</name>
    <dbReference type="NCBI Taxonomy" id="3702"/>
    <lineage>
        <taxon>Eukaryota</taxon>
        <taxon>Viridiplantae</taxon>
        <taxon>Streptophyta</taxon>
        <taxon>Embryophyta</taxon>
        <taxon>Tracheophyta</taxon>
        <taxon>Spermatophyta</taxon>
        <taxon>Magnoliopsida</taxon>
        <taxon>eudicotyledons</taxon>
        <taxon>Gunneridae</taxon>
        <taxon>Pentapetalae</taxon>
        <taxon>rosids</taxon>
        <taxon>malvids</taxon>
        <taxon>Brassicales</taxon>
        <taxon>Brassicaceae</taxon>
        <taxon>Camelineae</taxon>
        <taxon>Arabidopsis</taxon>
    </lineage>
</organism>
<evidence type="ECO:0000250" key="1"/>
<evidence type="ECO:0000250" key="2">
    <source>
        <dbReference type="UniProtKB" id="Q9SZZ8"/>
    </source>
</evidence>
<evidence type="ECO:0000255" key="3"/>
<evidence type="ECO:0000269" key="4">
    <source>
    </source>
</evidence>
<evidence type="ECO:0000269" key="5">
    <source>
    </source>
</evidence>
<evidence type="ECO:0000269" key="6">
    <source>
    </source>
</evidence>
<evidence type="ECO:0000305" key="7"/>
<evidence type="ECO:0000305" key="8">
    <source>
    </source>
</evidence>
<evidence type="ECO:0000305" key="9">
    <source>
    </source>
</evidence>
<evidence type="ECO:0000305" key="10">
    <source>
    </source>
</evidence>
<evidence type="ECO:0000305" key="11">
    <source>
    </source>
</evidence>
<accession>Q9LTG0</accession>
<accession>B3H4E9</accession>
<protein>
    <recommendedName>
        <fullName>Beta-carotene 3-hydroxylase 2, chloroplastic</fullName>
        <shortName>AtB2</shortName>
        <ecNumber evidence="2">1.14.15.24</ecNumber>
    </recommendedName>
</protein>
<proteinExistence type="evidence at transcript level"/>
<reference key="1">
    <citation type="journal article" date="2001" name="Plant Mol. Biol.">
        <title>Characterization of a second carotenoid beta-hydroxylase gene from Arabidopsis and its relationship to the LUT1 locus.</title>
        <authorList>
            <person name="Tian L."/>
            <person name="DellaPenna D."/>
        </authorList>
    </citation>
    <scope>NUCLEOTIDE SEQUENCE [MRNA]</scope>
    <scope>FUNCTION</scope>
    <scope>TISSUE SPECIFICITY</scope>
</reference>
<reference key="2">
    <citation type="submission" date="1999-04" db="EMBL/GenBank/DDBJ databases">
        <title>Structural analysis of Arabidopsis thaliana chromosome 5. XI.</title>
        <authorList>
            <person name="Kaneko T."/>
            <person name="Katoh T."/>
            <person name="Asamizu E."/>
            <person name="Sato S."/>
            <person name="Nakamura Y."/>
            <person name="Kotani H."/>
            <person name="Tabata S."/>
        </authorList>
    </citation>
    <scope>NUCLEOTIDE SEQUENCE [LARGE SCALE GENOMIC DNA]</scope>
    <source>
        <strain>cv. Columbia</strain>
    </source>
</reference>
<reference key="3">
    <citation type="journal article" date="2017" name="Plant J.">
        <title>Araport11: a complete reannotation of the Arabidopsis thaliana reference genome.</title>
        <authorList>
            <person name="Cheng C.Y."/>
            <person name="Krishnakumar V."/>
            <person name="Chan A.P."/>
            <person name="Thibaud-Nissen F."/>
            <person name="Schobel S."/>
            <person name="Town C.D."/>
        </authorList>
    </citation>
    <scope>GENOME REANNOTATION</scope>
    <source>
        <strain>cv. Columbia</strain>
    </source>
</reference>
<reference key="4">
    <citation type="journal article" date="2003" name="Science">
        <title>Empirical analysis of transcriptional activity in the Arabidopsis genome.</title>
        <authorList>
            <person name="Yamada K."/>
            <person name="Lim J."/>
            <person name="Dale J.M."/>
            <person name="Chen H."/>
            <person name="Shinn P."/>
            <person name="Palm C.J."/>
            <person name="Southwick A.M."/>
            <person name="Wu H.C."/>
            <person name="Kim C.J."/>
            <person name="Nguyen M."/>
            <person name="Pham P.K."/>
            <person name="Cheuk R.F."/>
            <person name="Karlin-Newmann G."/>
            <person name="Liu S.X."/>
            <person name="Lam B."/>
            <person name="Sakano H."/>
            <person name="Wu T."/>
            <person name="Yu G."/>
            <person name="Miranda M."/>
            <person name="Quach H.L."/>
            <person name="Tripp M."/>
            <person name="Chang C.H."/>
            <person name="Lee J.M."/>
            <person name="Toriumi M.J."/>
            <person name="Chan M.M."/>
            <person name="Tang C.C."/>
            <person name="Onodera C.S."/>
            <person name="Deng J.M."/>
            <person name="Akiyama K."/>
            <person name="Ansari Y."/>
            <person name="Arakawa T."/>
            <person name="Banh J."/>
            <person name="Banno F."/>
            <person name="Bowser L."/>
            <person name="Brooks S.Y."/>
            <person name="Carninci P."/>
            <person name="Chao Q."/>
            <person name="Choy N."/>
            <person name="Enju A."/>
            <person name="Goldsmith A.D."/>
            <person name="Gurjal M."/>
            <person name="Hansen N.F."/>
            <person name="Hayashizaki Y."/>
            <person name="Johnson-Hopson C."/>
            <person name="Hsuan V.W."/>
            <person name="Iida K."/>
            <person name="Karnes M."/>
            <person name="Khan S."/>
            <person name="Koesema E."/>
            <person name="Ishida J."/>
            <person name="Jiang P.X."/>
            <person name="Jones T."/>
            <person name="Kawai J."/>
            <person name="Kamiya A."/>
            <person name="Meyers C."/>
            <person name="Nakajima M."/>
            <person name="Narusaka M."/>
            <person name="Seki M."/>
            <person name="Sakurai T."/>
            <person name="Satou M."/>
            <person name="Tamse R."/>
            <person name="Vaysberg M."/>
            <person name="Wallender E.K."/>
            <person name="Wong C."/>
            <person name="Yamamura Y."/>
            <person name="Yuan S."/>
            <person name="Shinozaki K."/>
            <person name="Davis R.W."/>
            <person name="Theologis A."/>
            <person name="Ecker J.R."/>
        </authorList>
    </citation>
    <scope>NUCLEOTIDE SEQUENCE [LARGE SCALE MRNA] (ISOFORM 1)</scope>
    <source>
        <strain>cv. Columbia</strain>
    </source>
</reference>
<reference key="5">
    <citation type="journal article" date="2003" name="Plant Cell">
        <title>Functional analysis of beta- and epsilon-ring carotenoid hydroxylases in Arabidopsis.</title>
        <authorList>
            <person name="Tian L."/>
            <person name="Magallanes-Lundback M."/>
            <person name="Musetti V."/>
            <person name="DellaPenna D."/>
        </authorList>
    </citation>
    <scope>FUNCTION</scope>
    <scope>DISRUPTION PHENOTYPE</scope>
</reference>
<reference key="6">
    <citation type="journal article" date="2006" name="FEBS Lett.">
        <title>Elucidation of the beta-carotene hydroxylation pathway in Arabidopsis thaliana.</title>
        <authorList>
            <person name="Fiore A."/>
            <person name="Dall'osto L."/>
            <person name="Fraser P.D."/>
            <person name="Bassi R."/>
            <person name="Giuliano G."/>
        </authorList>
    </citation>
    <scope>FUNCTION</scope>
    <scope>DISRUPTION PHENOTYPE</scope>
</reference>
<reference key="7">
    <citation type="journal article" date="2009" name="Plant Cell Physiol.">
        <title>The evolution and function of carotenoid hydroxylases in Arabidopsis.</title>
        <authorList>
            <person name="Kim J."/>
            <person name="Smith J.J."/>
            <person name="Tian L."/>
            <person name="Dellapenna D."/>
        </authorList>
    </citation>
    <scope>FUNCTION</scope>
</reference>
<sequence>MAAGLSTIAVTLKPLNRSSFSANHPISTAVFPPSLRFNGFRRRKILTVCFVVEERKQSSPMDDDNKPESTTSSSEILMTSRLLKKAEKKKSERFTYLIAAVMSSFGITSMAIMAVYYRFSWQMKGGEVSVLEMFGTFALSVGAAVGMEFWARWAHRALWHDSLWNMHESHHKPREGAFELNDVFAITNAVPAIGLLYYGFLNKGLVPGLCFGAGLGITMFGMAYMFVHDGLVHKRFPVGPIANVPYLRKVAAAHQLHHTDKFKGVPYGLFLGPKEVEEVGGKEELEKEISRRIKLYNKGSSTS</sequence>
<comment type="function">
    <text evidence="8 9 10 11">Nonheme diiron monooxygenase involved in the biosynthesis of xanthophylls. Specific for beta-ring hydroxylations of beta-carotene. Also has a low activity toward the beta- and epsilon-rings of alpha-carotene. No activity with acyclic carotenoids such as lycopene and neurosporene. Uses ferredoxin as an electron donor.</text>
</comment>
<comment type="catalytic activity">
    <reaction evidence="2">
        <text>all-trans-beta-carotene + 4 reduced [2Fe-2S]-[ferredoxin] + 2 O2 + 4 H(+) = all-trans-zeaxanthin + 4 oxidized [2Fe-2S]-[ferredoxin] + 2 H2O</text>
        <dbReference type="Rhea" id="RHEA:30331"/>
        <dbReference type="Rhea" id="RHEA-COMP:10000"/>
        <dbReference type="Rhea" id="RHEA-COMP:10001"/>
        <dbReference type="ChEBI" id="CHEBI:15377"/>
        <dbReference type="ChEBI" id="CHEBI:15378"/>
        <dbReference type="ChEBI" id="CHEBI:15379"/>
        <dbReference type="ChEBI" id="CHEBI:17579"/>
        <dbReference type="ChEBI" id="CHEBI:27547"/>
        <dbReference type="ChEBI" id="CHEBI:33737"/>
        <dbReference type="ChEBI" id="CHEBI:33738"/>
        <dbReference type="EC" id="1.14.15.24"/>
    </reaction>
</comment>
<comment type="subunit">
    <text evidence="1">Homodimer.</text>
</comment>
<comment type="subcellular location">
    <subcellularLocation>
        <location evidence="7">Plastid</location>
        <location evidence="7">Chloroplast membrane</location>
        <topology evidence="7">Multi-pass membrane protein</topology>
    </subcellularLocation>
</comment>
<comment type="alternative products">
    <event type="alternative splicing"/>
    <isoform>
        <id>Q9LTG0-1</id>
        <name>1</name>
        <sequence type="displayed"/>
    </isoform>
    <isoform>
        <id>Q9LTG0-2</id>
        <name>2</name>
        <sequence type="described" ref="VSP_041795"/>
    </isoform>
</comment>
<comment type="tissue specificity">
    <text evidence="4">Expressed in leaves, flowers, stems, roots and siliques.</text>
</comment>
<comment type="domain">
    <text>The histidine box domains may contain the active site and/or be involved in iron binding.</text>
</comment>
<comment type="disruption phenotype">
    <text evidence="5 6">No visible phenotype when grown under normal light conditions; due to the redundancy with BCH1. Bch1 and bch2 double mutant has no visible phenotype, but lower levels of beta, beta-xanthophylls and increased beta-carotene and lutein. Cyp97c1, bch1 and bch2 triple mutant is paler and smaller than wild-type.</text>
</comment>
<comment type="similarity">
    <text evidence="7">Belongs to the sterol desaturase family.</text>
</comment>
<gene>
    <name type="primary">BETA-OHASE 2</name>
    <name type="synonym">B2</name>
    <name type="synonym">CHY2</name>
    <name type="ordered locus">At5g52570</name>
    <name type="ORF">F6N7.5</name>
</gene>
<dbReference type="EC" id="1.14.15.24" evidence="2"/>
<dbReference type="EMBL" id="AB025606">
    <property type="protein sequence ID" value="BAA98075.1"/>
    <property type="molecule type" value="Genomic_DNA"/>
</dbReference>
<dbReference type="EMBL" id="CP002688">
    <property type="protein sequence ID" value="AED96235.1"/>
    <property type="molecule type" value="Genomic_DNA"/>
</dbReference>
<dbReference type="EMBL" id="CP002688">
    <property type="protein sequence ID" value="AED96236.1"/>
    <property type="molecule type" value="Genomic_DNA"/>
</dbReference>
<dbReference type="EMBL" id="AY074394">
    <property type="protein sequence ID" value="AAL67090.1"/>
    <property type="molecule type" value="mRNA"/>
</dbReference>
<dbReference type="EMBL" id="AY117225">
    <property type="protein sequence ID" value="AAM51300.1"/>
    <property type="molecule type" value="mRNA"/>
</dbReference>
<dbReference type="RefSeq" id="NP_001119420.1">
    <molecule id="Q9LTG0-2"/>
    <property type="nucleotide sequence ID" value="NM_001125948.1"/>
</dbReference>
<dbReference type="RefSeq" id="NP_200070.1">
    <molecule id="Q9LTG0-1"/>
    <property type="nucleotide sequence ID" value="NM_124636.4"/>
</dbReference>
<dbReference type="BioGRID" id="20579">
    <property type="interactions" value="1"/>
</dbReference>
<dbReference type="FunCoup" id="Q9LTG0">
    <property type="interactions" value="42"/>
</dbReference>
<dbReference type="STRING" id="3702.Q9LTG0"/>
<dbReference type="PaxDb" id="3702-AT5G52570.1"/>
<dbReference type="ProteomicsDB" id="240851">
    <molecule id="Q9LTG0-1"/>
</dbReference>
<dbReference type="EnsemblPlants" id="AT5G52570.1">
    <molecule id="Q9LTG0-1"/>
    <property type="protein sequence ID" value="AT5G52570.1"/>
    <property type="gene ID" value="AT5G52570"/>
</dbReference>
<dbReference type="EnsemblPlants" id="AT5G52570.2">
    <molecule id="Q9LTG0-2"/>
    <property type="protein sequence ID" value="AT5G52570.2"/>
    <property type="gene ID" value="AT5G52570"/>
</dbReference>
<dbReference type="GeneID" id="835334"/>
<dbReference type="Gramene" id="AT5G52570.1">
    <molecule id="Q9LTG0-1"/>
    <property type="protein sequence ID" value="AT5G52570.1"/>
    <property type="gene ID" value="AT5G52570"/>
</dbReference>
<dbReference type="Gramene" id="AT5G52570.2">
    <molecule id="Q9LTG0-2"/>
    <property type="protein sequence ID" value="AT5G52570.2"/>
    <property type="gene ID" value="AT5G52570"/>
</dbReference>
<dbReference type="KEGG" id="ath:AT5G52570"/>
<dbReference type="Araport" id="AT5G52570"/>
<dbReference type="TAIR" id="AT5G52570">
    <property type="gene designation" value="BETA-OHASE 2"/>
</dbReference>
<dbReference type="eggNOG" id="ENOG502QSIR">
    <property type="taxonomic scope" value="Eukaryota"/>
</dbReference>
<dbReference type="HOGENOM" id="CLU_054855_0_1_1"/>
<dbReference type="InParanoid" id="Q9LTG0"/>
<dbReference type="OMA" id="MEHWARW"/>
<dbReference type="PhylomeDB" id="Q9LTG0"/>
<dbReference type="BioCyc" id="ARA:AT5G52570-MONOMER"/>
<dbReference type="BioCyc" id="MetaCyc:AT5G52570-MONOMER"/>
<dbReference type="BRENDA" id="1.14.15.24">
    <property type="organism ID" value="399"/>
</dbReference>
<dbReference type="PRO" id="PR:Q9LTG0"/>
<dbReference type="Proteomes" id="UP000006548">
    <property type="component" value="Chromosome 5"/>
</dbReference>
<dbReference type="ExpressionAtlas" id="Q9LTG0">
    <property type="expression patterns" value="baseline and differential"/>
</dbReference>
<dbReference type="GO" id="GO:0031969">
    <property type="term" value="C:chloroplast membrane"/>
    <property type="evidence" value="ECO:0007669"/>
    <property type="project" value="UniProtKB-SubCell"/>
</dbReference>
<dbReference type="GO" id="GO:0010291">
    <property type="term" value="F:beta-carotene 3-hydroxylase activity"/>
    <property type="evidence" value="ECO:0007669"/>
    <property type="project" value="UniProtKB-EC"/>
</dbReference>
<dbReference type="GO" id="GO:0016787">
    <property type="term" value="F:hydrolase activity"/>
    <property type="evidence" value="ECO:0007669"/>
    <property type="project" value="UniProtKB-KW"/>
</dbReference>
<dbReference type="GO" id="GO:0005506">
    <property type="term" value="F:iron ion binding"/>
    <property type="evidence" value="ECO:0007669"/>
    <property type="project" value="InterPro"/>
</dbReference>
<dbReference type="GO" id="GO:0016123">
    <property type="term" value="P:xanthophyll biosynthetic process"/>
    <property type="evidence" value="ECO:0000316"/>
    <property type="project" value="TAIR"/>
</dbReference>
<dbReference type="InterPro" id="IPR045019">
    <property type="entry name" value="BETA-OHASE-like"/>
</dbReference>
<dbReference type="InterPro" id="IPR006694">
    <property type="entry name" value="Fatty_acid_hydroxylase"/>
</dbReference>
<dbReference type="PANTHER" id="PTHR31899">
    <property type="entry name" value="BETA-CAROTENE 3-HYDROXYLASE 1, CHLOROPLASTIC"/>
    <property type="match status" value="1"/>
</dbReference>
<dbReference type="PANTHER" id="PTHR31899:SF16">
    <property type="entry name" value="BETA-CAROTENE 3-HYDROXYLASE 2, CHLOROPLASTIC"/>
    <property type="match status" value="1"/>
</dbReference>
<dbReference type="Pfam" id="PF04116">
    <property type="entry name" value="FA_hydroxylase"/>
    <property type="match status" value="1"/>
</dbReference>